<reference key="1">
    <citation type="journal article" date="1986" name="J. Biol. Chem.">
        <title>Molecular cloning and nucleotide sequence of a complete human uroporphyrinogen decarboxylase cDNA.</title>
        <authorList>
            <person name="Romeo P.-H."/>
            <person name="Raich N."/>
            <person name="Dubart A."/>
            <person name="Beaupain D."/>
            <person name="Pryor M."/>
            <person name="Kushner J.P."/>
            <person name="Cohen-Solal M."/>
            <person name="Goossens M."/>
        </authorList>
    </citation>
    <scope>NUCLEOTIDE SEQUENCE [MRNA]</scope>
    <scope>PROTEIN SEQUENCE OF 2-21; 37-65; 101-123; 175-251; 259-322; 325-344 AND 346-367</scope>
</reference>
<reference key="2">
    <citation type="journal article" date="1996" name="Am. J. Hum. Genet.">
        <title>Uroporphyrinogen decarboxylase: complete human gene sequence and molecular study of three families with hepatoerythropoietic porphyria.</title>
        <authorList>
            <person name="Moran-Jimenez M.J."/>
            <person name="Ged C."/>
            <person name="Romana M."/>
            <person name="de Salamanca R.E."/>
            <person name="Taieb A."/>
            <person name="Topi G."/>
            <person name="D'Alessandro L."/>
            <person name="de Verneuil H."/>
        </authorList>
    </citation>
    <scope>NUCLEOTIDE SEQUENCE [GENOMIC DNA]</scope>
    <scope>VARIANTS HEP LEU-62; LEU-77; GLU-281 AND CYS-311</scope>
</reference>
<reference key="3">
    <citation type="submission" date="1998-02" db="EMBL/GenBank/DDBJ databases">
        <authorList>
            <person name="Mendez M."/>
        </authorList>
    </citation>
    <scope>NUCLEOTIDE SEQUENCE [GENOMIC DNA]</scope>
</reference>
<reference key="4">
    <citation type="submission" date="1998-11" db="EMBL/GenBank/DDBJ databases">
        <title>Uroporphyrinogen decarboxylase (UROD) cDNA sequence from Italian population.</title>
        <authorList>
            <person name="Martinez di Montemuros F."/>
            <person name="Fiorelli G."/>
            <person name="Cappellini M.D."/>
        </authorList>
    </citation>
    <scope>NUCLEOTIDE SEQUENCE [MRNA]</scope>
    <scope>VARIANT LEU-77</scope>
</reference>
<reference key="5">
    <citation type="submission" date="2003-05" db="EMBL/GenBank/DDBJ databases">
        <title>Molecular characterization of UROD gene in Italian patients with familial porphyria cutanea tarda (f-PCT).</title>
        <authorList>
            <person name="Martinez di Montemuros F."/>
            <person name="Cappellini M.D."/>
        </authorList>
    </citation>
    <scope>NUCLEOTIDE SEQUENCE [GENOMIC DNA]</scope>
    <scope>VARIANT LEU-77</scope>
</reference>
<reference key="6">
    <citation type="submission" date="2003-05" db="EMBL/GenBank/DDBJ databases">
        <title>Cloning of human full-length CDSs in BD Creator(TM) system donor vector.</title>
        <authorList>
            <person name="Kalnine N."/>
            <person name="Chen X."/>
            <person name="Rolfs A."/>
            <person name="Halleck A."/>
            <person name="Hines L."/>
            <person name="Eisenstein S."/>
            <person name="Koundinya M."/>
            <person name="Raphael J."/>
            <person name="Moreira D."/>
            <person name="Kelley T."/>
            <person name="LaBaer J."/>
            <person name="Lin Y."/>
            <person name="Phelan M."/>
            <person name="Farmer A."/>
        </authorList>
    </citation>
    <scope>NUCLEOTIDE SEQUENCE [LARGE SCALE MRNA]</scope>
    <scope>VARIANT VAL-303</scope>
</reference>
<reference key="7">
    <citation type="submission" date="2004-06" db="EMBL/GenBank/DDBJ databases">
        <title>Cloning of human full open reading frames in Gateway(TM) system entry vector (pDONR201).</title>
        <authorList>
            <person name="Ebert L."/>
            <person name="Schick M."/>
            <person name="Neubert P."/>
            <person name="Schatten R."/>
            <person name="Henze S."/>
            <person name="Korn B."/>
        </authorList>
    </citation>
    <scope>NUCLEOTIDE SEQUENCE [LARGE SCALE MRNA]</scope>
</reference>
<reference key="8">
    <citation type="submission" date="2004-06" db="EMBL/GenBank/DDBJ databases">
        <title>Cloning of human full open reading frames in Gateway(TM) system entry vector (pDONR201).</title>
        <authorList>
            <person name="Halleck A."/>
            <person name="Ebert L."/>
            <person name="Mkoundinya M."/>
            <person name="Schick M."/>
            <person name="Eisenstein S."/>
            <person name="Neubert P."/>
            <person name="Kstrang K."/>
            <person name="Schatten R."/>
            <person name="Shen B."/>
            <person name="Henze S."/>
            <person name="Mar W."/>
            <person name="Korn B."/>
            <person name="Zuo D."/>
            <person name="Hu Y."/>
            <person name="LaBaer J."/>
        </authorList>
    </citation>
    <scope>NUCLEOTIDE SEQUENCE [LARGE SCALE MRNA]</scope>
</reference>
<reference key="9">
    <citation type="journal article" date="2004" name="Nat. Genet.">
        <title>Complete sequencing and characterization of 21,243 full-length human cDNAs.</title>
        <authorList>
            <person name="Ota T."/>
            <person name="Suzuki Y."/>
            <person name="Nishikawa T."/>
            <person name="Otsuki T."/>
            <person name="Sugiyama T."/>
            <person name="Irie R."/>
            <person name="Wakamatsu A."/>
            <person name="Hayashi K."/>
            <person name="Sato H."/>
            <person name="Nagai K."/>
            <person name="Kimura K."/>
            <person name="Makita H."/>
            <person name="Sekine M."/>
            <person name="Obayashi M."/>
            <person name="Nishi T."/>
            <person name="Shibahara T."/>
            <person name="Tanaka T."/>
            <person name="Ishii S."/>
            <person name="Yamamoto J."/>
            <person name="Saito K."/>
            <person name="Kawai Y."/>
            <person name="Isono Y."/>
            <person name="Nakamura Y."/>
            <person name="Nagahari K."/>
            <person name="Murakami K."/>
            <person name="Yasuda T."/>
            <person name="Iwayanagi T."/>
            <person name="Wagatsuma M."/>
            <person name="Shiratori A."/>
            <person name="Sudo H."/>
            <person name="Hosoiri T."/>
            <person name="Kaku Y."/>
            <person name="Kodaira H."/>
            <person name="Kondo H."/>
            <person name="Sugawara M."/>
            <person name="Takahashi M."/>
            <person name="Kanda K."/>
            <person name="Yokoi T."/>
            <person name="Furuya T."/>
            <person name="Kikkawa E."/>
            <person name="Omura Y."/>
            <person name="Abe K."/>
            <person name="Kamihara K."/>
            <person name="Katsuta N."/>
            <person name="Sato K."/>
            <person name="Tanikawa M."/>
            <person name="Yamazaki M."/>
            <person name="Ninomiya K."/>
            <person name="Ishibashi T."/>
            <person name="Yamashita H."/>
            <person name="Murakawa K."/>
            <person name="Fujimori K."/>
            <person name="Tanai H."/>
            <person name="Kimata M."/>
            <person name="Watanabe M."/>
            <person name="Hiraoka S."/>
            <person name="Chiba Y."/>
            <person name="Ishida S."/>
            <person name="Ono Y."/>
            <person name="Takiguchi S."/>
            <person name="Watanabe S."/>
            <person name="Yosida M."/>
            <person name="Hotuta T."/>
            <person name="Kusano J."/>
            <person name="Kanehori K."/>
            <person name="Takahashi-Fujii A."/>
            <person name="Hara H."/>
            <person name="Tanase T.-O."/>
            <person name="Nomura Y."/>
            <person name="Togiya S."/>
            <person name="Komai F."/>
            <person name="Hara R."/>
            <person name="Takeuchi K."/>
            <person name="Arita M."/>
            <person name="Imose N."/>
            <person name="Musashino K."/>
            <person name="Yuuki H."/>
            <person name="Oshima A."/>
            <person name="Sasaki N."/>
            <person name="Aotsuka S."/>
            <person name="Yoshikawa Y."/>
            <person name="Matsunawa H."/>
            <person name="Ichihara T."/>
            <person name="Shiohata N."/>
            <person name="Sano S."/>
            <person name="Moriya S."/>
            <person name="Momiyama H."/>
            <person name="Satoh N."/>
            <person name="Takami S."/>
            <person name="Terashima Y."/>
            <person name="Suzuki O."/>
            <person name="Nakagawa S."/>
            <person name="Senoh A."/>
            <person name="Mizoguchi H."/>
            <person name="Goto Y."/>
            <person name="Shimizu F."/>
            <person name="Wakebe H."/>
            <person name="Hishigaki H."/>
            <person name="Watanabe T."/>
            <person name="Sugiyama A."/>
            <person name="Takemoto M."/>
            <person name="Kawakami B."/>
            <person name="Yamazaki M."/>
            <person name="Watanabe K."/>
            <person name="Kumagai A."/>
            <person name="Itakura S."/>
            <person name="Fukuzumi Y."/>
            <person name="Fujimori Y."/>
            <person name="Komiyama M."/>
            <person name="Tashiro H."/>
            <person name="Tanigami A."/>
            <person name="Fujiwara T."/>
            <person name="Ono T."/>
            <person name="Yamada K."/>
            <person name="Fujii Y."/>
            <person name="Ozaki K."/>
            <person name="Hirao M."/>
            <person name="Ohmori Y."/>
            <person name="Kawabata A."/>
            <person name="Hikiji T."/>
            <person name="Kobatake N."/>
            <person name="Inagaki H."/>
            <person name="Ikema Y."/>
            <person name="Okamoto S."/>
            <person name="Okitani R."/>
            <person name="Kawakami T."/>
            <person name="Noguchi S."/>
            <person name="Itoh T."/>
            <person name="Shigeta K."/>
            <person name="Senba T."/>
            <person name="Matsumura K."/>
            <person name="Nakajima Y."/>
            <person name="Mizuno T."/>
            <person name="Morinaga M."/>
            <person name="Sasaki M."/>
            <person name="Togashi T."/>
            <person name="Oyama M."/>
            <person name="Hata H."/>
            <person name="Watanabe M."/>
            <person name="Komatsu T."/>
            <person name="Mizushima-Sugano J."/>
            <person name="Satoh T."/>
            <person name="Shirai Y."/>
            <person name="Takahashi Y."/>
            <person name="Nakagawa K."/>
            <person name="Okumura K."/>
            <person name="Nagase T."/>
            <person name="Nomura N."/>
            <person name="Kikuchi H."/>
            <person name="Masuho Y."/>
            <person name="Yamashita R."/>
            <person name="Nakai K."/>
            <person name="Yada T."/>
            <person name="Nakamura Y."/>
            <person name="Ohara O."/>
            <person name="Isogai T."/>
            <person name="Sugano S."/>
        </authorList>
    </citation>
    <scope>NUCLEOTIDE SEQUENCE [LARGE SCALE MRNA]</scope>
    <source>
        <tissue>Skeletal muscle</tissue>
    </source>
</reference>
<reference key="10">
    <citation type="journal article" date="2006" name="Nature">
        <title>The DNA sequence and biological annotation of human chromosome 1.</title>
        <authorList>
            <person name="Gregory S.G."/>
            <person name="Barlow K.F."/>
            <person name="McLay K.E."/>
            <person name="Kaul R."/>
            <person name="Swarbreck D."/>
            <person name="Dunham A."/>
            <person name="Scott C.E."/>
            <person name="Howe K.L."/>
            <person name="Woodfine K."/>
            <person name="Spencer C.C.A."/>
            <person name="Jones M.C."/>
            <person name="Gillson C."/>
            <person name="Searle S."/>
            <person name="Zhou Y."/>
            <person name="Kokocinski F."/>
            <person name="McDonald L."/>
            <person name="Evans R."/>
            <person name="Phillips K."/>
            <person name="Atkinson A."/>
            <person name="Cooper R."/>
            <person name="Jones C."/>
            <person name="Hall R.E."/>
            <person name="Andrews T.D."/>
            <person name="Lloyd C."/>
            <person name="Ainscough R."/>
            <person name="Almeida J.P."/>
            <person name="Ambrose K.D."/>
            <person name="Anderson F."/>
            <person name="Andrew R.W."/>
            <person name="Ashwell R.I.S."/>
            <person name="Aubin K."/>
            <person name="Babbage A.K."/>
            <person name="Bagguley C.L."/>
            <person name="Bailey J."/>
            <person name="Beasley H."/>
            <person name="Bethel G."/>
            <person name="Bird C.P."/>
            <person name="Bray-Allen S."/>
            <person name="Brown J.Y."/>
            <person name="Brown A.J."/>
            <person name="Buckley D."/>
            <person name="Burton J."/>
            <person name="Bye J."/>
            <person name="Carder C."/>
            <person name="Chapman J.C."/>
            <person name="Clark S.Y."/>
            <person name="Clarke G."/>
            <person name="Clee C."/>
            <person name="Cobley V."/>
            <person name="Collier R.E."/>
            <person name="Corby N."/>
            <person name="Coville G.J."/>
            <person name="Davies J."/>
            <person name="Deadman R."/>
            <person name="Dunn M."/>
            <person name="Earthrowl M."/>
            <person name="Ellington A.G."/>
            <person name="Errington H."/>
            <person name="Frankish A."/>
            <person name="Frankland J."/>
            <person name="French L."/>
            <person name="Garner P."/>
            <person name="Garnett J."/>
            <person name="Gay L."/>
            <person name="Ghori M.R.J."/>
            <person name="Gibson R."/>
            <person name="Gilby L.M."/>
            <person name="Gillett W."/>
            <person name="Glithero R.J."/>
            <person name="Grafham D.V."/>
            <person name="Griffiths C."/>
            <person name="Griffiths-Jones S."/>
            <person name="Grocock R."/>
            <person name="Hammond S."/>
            <person name="Harrison E.S.I."/>
            <person name="Hart E."/>
            <person name="Haugen E."/>
            <person name="Heath P.D."/>
            <person name="Holmes S."/>
            <person name="Holt K."/>
            <person name="Howden P.J."/>
            <person name="Hunt A.R."/>
            <person name="Hunt S.E."/>
            <person name="Hunter G."/>
            <person name="Isherwood J."/>
            <person name="James R."/>
            <person name="Johnson C."/>
            <person name="Johnson D."/>
            <person name="Joy A."/>
            <person name="Kay M."/>
            <person name="Kershaw J.K."/>
            <person name="Kibukawa M."/>
            <person name="Kimberley A.M."/>
            <person name="King A."/>
            <person name="Knights A.J."/>
            <person name="Lad H."/>
            <person name="Laird G."/>
            <person name="Lawlor S."/>
            <person name="Leongamornlert D.A."/>
            <person name="Lloyd D.M."/>
            <person name="Loveland J."/>
            <person name="Lovell J."/>
            <person name="Lush M.J."/>
            <person name="Lyne R."/>
            <person name="Martin S."/>
            <person name="Mashreghi-Mohammadi M."/>
            <person name="Matthews L."/>
            <person name="Matthews N.S.W."/>
            <person name="McLaren S."/>
            <person name="Milne S."/>
            <person name="Mistry S."/>
            <person name="Moore M.J.F."/>
            <person name="Nickerson T."/>
            <person name="O'Dell C.N."/>
            <person name="Oliver K."/>
            <person name="Palmeiri A."/>
            <person name="Palmer S.A."/>
            <person name="Parker A."/>
            <person name="Patel D."/>
            <person name="Pearce A.V."/>
            <person name="Peck A.I."/>
            <person name="Pelan S."/>
            <person name="Phelps K."/>
            <person name="Phillimore B.J."/>
            <person name="Plumb R."/>
            <person name="Rajan J."/>
            <person name="Raymond C."/>
            <person name="Rouse G."/>
            <person name="Saenphimmachak C."/>
            <person name="Sehra H.K."/>
            <person name="Sheridan E."/>
            <person name="Shownkeen R."/>
            <person name="Sims S."/>
            <person name="Skuce C.D."/>
            <person name="Smith M."/>
            <person name="Steward C."/>
            <person name="Subramanian S."/>
            <person name="Sycamore N."/>
            <person name="Tracey A."/>
            <person name="Tromans A."/>
            <person name="Van Helmond Z."/>
            <person name="Wall M."/>
            <person name="Wallis J.M."/>
            <person name="White S."/>
            <person name="Whitehead S.L."/>
            <person name="Wilkinson J.E."/>
            <person name="Willey D.L."/>
            <person name="Williams H."/>
            <person name="Wilming L."/>
            <person name="Wray P.W."/>
            <person name="Wu Z."/>
            <person name="Coulson A."/>
            <person name="Vaudin M."/>
            <person name="Sulston J.E."/>
            <person name="Durbin R.M."/>
            <person name="Hubbard T."/>
            <person name="Wooster R."/>
            <person name="Dunham I."/>
            <person name="Carter N.P."/>
            <person name="McVean G."/>
            <person name="Ross M.T."/>
            <person name="Harrow J."/>
            <person name="Olson M.V."/>
            <person name="Beck S."/>
            <person name="Rogers J."/>
            <person name="Bentley D.R."/>
        </authorList>
    </citation>
    <scope>NUCLEOTIDE SEQUENCE [LARGE SCALE GENOMIC DNA]</scope>
</reference>
<reference key="11">
    <citation type="submission" date="2005-09" db="EMBL/GenBank/DDBJ databases">
        <authorList>
            <person name="Mural R.J."/>
            <person name="Istrail S."/>
            <person name="Sutton G.G."/>
            <person name="Florea L."/>
            <person name="Halpern A.L."/>
            <person name="Mobarry C.M."/>
            <person name="Lippert R."/>
            <person name="Walenz B."/>
            <person name="Shatkay H."/>
            <person name="Dew I."/>
            <person name="Miller J.R."/>
            <person name="Flanigan M.J."/>
            <person name="Edwards N.J."/>
            <person name="Bolanos R."/>
            <person name="Fasulo D."/>
            <person name="Halldorsson B.V."/>
            <person name="Hannenhalli S."/>
            <person name="Turner R."/>
            <person name="Yooseph S."/>
            <person name="Lu F."/>
            <person name="Nusskern D.R."/>
            <person name="Shue B.C."/>
            <person name="Zheng X.H."/>
            <person name="Zhong F."/>
            <person name="Delcher A.L."/>
            <person name="Huson D.H."/>
            <person name="Kravitz S.A."/>
            <person name="Mouchard L."/>
            <person name="Reinert K."/>
            <person name="Remington K.A."/>
            <person name="Clark A.G."/>
            <person name="Waterman M.S."/>
            <person name="Eichler E.E."/>
            <person name="Adams M.D."/>
            <person name="Hunkapiller M.W."/>
            <person name="Myers E.W."/>
            <person name="Venter J.C."/>
        </authorList>
    </citation>
    <scope>NUCLEOTIDE SEQUENCE [LARGE SCALE GENOMIC DNA]</scope>
</reference>
<reference key="12">
    <citation type="journal article" date="2004" name="Genome Res.">
        <title>The status, quality, and expansion of the NIH full-length cDNA project: the Mammalian Gene Collection (MGC).</title>
        <authorList>
            <consortium name="The MGC Project Team"/>
        </authorList>
    </citation>
    <scope>NUCLEOTIDE SEQUENCE [LARGE SCALE MRNA]</scope>
    <scope>VARIANT VAL-303</scope>
    <source>
        <tissue>Lymph</tissue>
    </source>
</reference>
<reference key="13">
    <citation type="journal article" date="1987" name="Nucleic Acids Res.">
        <title>Structure of the gene for human uroporphyrinogen decarboxylase.</title>
        <authorList>
            <person name="Romana M."/>
            <person name="Dubart A."/>
            <person name="Beaupain D."/>
            <person name="Chabret C."/>
            <person name="Goossens M."/>
            <person name="Romeo P.-H."/>
        </authorList>
    </citation>
    <scope>NUCLEOTIDE SEQUENCE [GENOMIC DNA] OF 1-7</scope>
</reference>
<reference key="14">
    <citation type="journal article" date="1990" name="J. Clin. Invest.">
        <title>Uroporphyrinogen decarboxylase: a splice site mutation causes the deletion of exon 6 in multiple families with porphyria cutanea tarda.</title>
        <authorList>
            <person name="Garey J.R."/>
            <person name="Harrison L.M."/>
            <person name="Franklin K.F."/>
            <person name="Metcalf K.M."/>
            <person name="Radisky E.S."/>
            <person name="Kushner J.P."/>
        </authorList>
    </citation>
    <scope>NUCLEOTIDE SEQUENCE [GENOMIC DNA] OF 95-258</scope>
    <scope>INVOLVEMENT IN FPCT</scope>
</reference>
<reference key="15">
    <citation type="journal article" date="1997" name="Protein Sci.">
        <title>Characterization and crystallization of human uroporphyrinogen decarboxylase.</title>
        <authorList>
            <person name="Phillips J.D."/>
            <person name="Whitby F.G."/>
            <person name="Kushner J.P."/>
            <person name="Hill C.P."/>
        </authorList>
    </citation>
    <scope>CRYSTALLIZATION</scope>
    <scope>IDENTIFICATION BY MASS SPECTROMETRY</scope>
    <scope>SUBUNIT</scope>
</reference>
<reference key="16">
    <citation type="journal article" date="2008" name="Proteins">
        <title>Human uroporphyrinogen III synthase: NMR-based mapping of the active site.</title>
        <authorList>
            <person name="Cunha L."/>
            <person name="Kuti M."/>
            <person name="Bishop D.F."/>
            <person name="Mezei M."/>
            <person name="Zeng L."/>
            <person name="Zhou M.M."/>
            <person name="Desnick R.J."/>
        </authorList>
    </citation>
    <scope>FUNCTION</scope>
    <scope>CATALYTIC ACTIVITY</scope>
    <scope>BIOPHYSICOCHEMICAL PROPERTIES</scope>
</reference>
<reference key="17">
    <citation type="journal article" date="2009" name="Anal. Chem.">
        <title>Lys-N and trypsin cover complementary parts of the phosphoproteome in a refined SCX-based approach.</title>
        <authorList>
            <person name="Gauci S."/>
            <person name="Helbig A.O."/>
            <person name="Slijper M."/>
            <person name="Krijgsveld J."/>
            <person name="Heck A.J."/>
            <person name="Mohammed S."/>
        </authorList>
    </citation>
    <scope>ACETYLATION [LARGE SCALE ANALYSIS] AT MET-1</scope>
    <scope>IDENTIFICATION BY MASS SPECTROMETRY [LARGE SCALE ANALYSIS]</scope>
</reference>
<reference key="18">
    <citation type="journal article" date="2011" name="BMC Syst. Biol.">
        <title>Initial characterization of the human central proteome.</title>
        <authorList>
            <person name="Burkard T.R."/>
            <person name="Planyavsky M."/>
            <person name="Kaupe I."/>
            <person name="Breitwieser F.P."/>
            <person name="Buerckstuemmer T."/>
            <person name="Bennett K.L."/>
            <person name="Superti-Furga G."/>
            <person name="Colinge J."/>
        </authorList>
    </citation>
    <scope>IDENTIFICATION BY MASS SPECTROMETRY [LARGE SCALE ANALYSIS]</scope>
</reference>
<reference key="19">
    <citation type="journal article" date="2012" name="Mol. Cell. Proteomics">
        <title>Comparative large-scale characterisation of plant vs. mammal proteins reveals similar and idiosyncratic N-alpha acetylation features.</title>
        <authorList>
            <person name="Bienvenut W.V."/>
            <person name="Sumpton D."/>
            <person name="Martinez A."/>
            <person name="Lilla S."/>
            <person name="Espagne C."/>
            <person name="Meinnel T."/>
            <person name="Giglione C."/>
        </authorList>
    </citation>
    <scope>ACETYLATION [LARGE SCALE ANALYSIS] AT MET-1</scope>
    <scope>IDENTIFICATION BY MASS SPECTROMETRY [LARGE SCALE ANALYSIS]</scope>
</reference>
<reference key="20">
    <citation type="journal article" date="2012" name="Proc. Natl. Acad. Sci. U.S.A.">
        <title>N-terminal acetylome analyses and functional insights of the N-terminal acetyltransferase NatB.</title>
        <authorList>
            <person name="Van Damme P."/>
            <person name="Lasa M."/>
            <person name="Polevoda B."/>
            <person name="Gazquez C."/>
            <person name="Elosegui-Artola A."/>
            <person name="Kim D.S."/>
            <person name="De Juan-Pardo E."/>
            <person name="Demeyer K."/>
            <person name="Hole K."/>
            <person name="Larrea E."/>
            <person name="Timmerman E."/>
            <person name="Prieto J."/>
            <person name="Arnesen T."/>
            <person name="Sherman F."/>
            <person name="Gevaert K."/>
            <person name="Aldabe R."/>
        </authorList>
    </citation>
    <scope>ACETYLATION [LARGE SCALE ANALYSIS] AT MET-1</scope>
    <scope>IDENTIFICATION BY MASS SPECTROMETRY [LARGE SCALE ANALYSIS]</scope>
</reference>
<reference key="21">
    <citation type="journal article" date="1998" name="EMBO J.">
        <title>Crystal structure of human uroporphyrinogen decarboxylase.</title>
        <authorList>
            <person name="Whitby F.G."/>
            <person name="Phillips J.D."/>
            <person name="Kushner J.P."/>
            <person name="Hill C.P."/>
        </authorList>
    </citation>
    <scope>X-RAY CRYSTALLOGRAPHY (1.6 ANGSTROMS)</scope>
    <scope>SUBUNIT</scope>
</reference>
<reference key="22">
    <citation type="journal article" date="2001" name="Blood">
        <title>Functional consequences of naturally occurring mutations in human uroporphyrinogen decarboxylase.</title>
        <authorList>
            <person name="Phillips J.D."/>
            <person name="Parker T.L."/>
            <person name="Schubert H.L."/>
            <person name="Whitby F.G."/>
            <person name="Hill C.P."/>
            <person name="Kushner J.P."/>
        </authorList>
    </citation>
    <scope>X-RAY CRYSTALLOGRAPHY (2.1 ANGSTROMS) OF VARIANTS FPCT ASP-156; LEU-232 AND THR-260</scope>
    <scope>FUNCTION</scope>
    <scope>CATALYTIC ACTIVITY</scope>
    <scope>PATHWAY</scope>
    <scope>VARIANTS FPCT GLU-25; SER-80; GLN-134; ASP-156; ARG-165; LYS-167; PRO-193; LEU-232; GLN-253 AND THR-260</scope>
    <scope>CHARACTERIZATION OF VARIANTS FPCT GLU-25; SER-80; GLN-134; ASP-156; ARG-165; LYS-167; PRO-193; LEU-232; GLN-253 AND THR-260</scope>
</reference>
<reference evidence="35 36 37 38 39 40 41" key="23">
    <citation type="journal article" date="2003" name="EMBO J.">
        <title>Structural basis for tetrapyrrole coordination by uroporphyrinogen decarboxylase.</title>
        <authorList>
            <person name="Phillips J.D."/>
            <person name="Whitby F.G."/>
            <person name="Kushner J.P."/>
            <person name="Hill C.P."/>
        </authorList>
    </citation>
    <scope>X-RAY CRYSTALLOGRAPHY (1.65 ANGSTROMS) OF WILD-TYPE AND MUTANTS ASN-86; GLU-86; GLY-86 AND PHE-164 IN COMPLEX WITH COPROPORPHYRINOGEN I AND COPROPORPHYRINOGEN III</scope>
    <scope>FUNCTION</scope>
    <scope>CATALYTIC ACTIVITY</scope>
    <scope>PATHWAY</scope>
    <scope>MUTAGENESIS OF ASP-86 AND TYR-164</scope>
    <scope>REACTION MECHANISM</scope>
</reference>
<reference key="24">
    <citation type="journal article" date="1986" name="Science">
        <title>Uroporphyrinogen decarboxylase structural mutant (Gly-281--&gt;Glu) in a case of porphyria.</title>
        <authorList>
            <person name="de Verneuil H."/>
            <person name="Grandchamp B."/>
            <person name="Beaumont C."/>
            <person name="Picat C."/>
            <person name="Nordmann Y."/>
        </authorList>
    </citation>
    <scope>VARIANT HEP GLU-281</scope>
</reference>
<reference key="25">
    <citation type="journal article" date="1989" name="Blood">
        <title>A point mutation in the coding region of uroporphyrinogen decarboxylase associated with familial porphyria cutanea tarda.</title>
        <authorList>
            <person name="Garey J.R."/>
            <person name="Hansen J.L."/>
            <person name="Harrison L.M."/>
            <person name="Kennedy J.B."/>
            <person name="Kushner J.P."/>
        </authorList>
    </citation>
    <scope>VARIANT FPCT VAL-281</scope>
</reference>
<reference key="26">
    <citation type="journal article" date="1991" name="Eur. J. Clin. Invest.">
        <title>Identification of a new mutation responsible for hepatoerythropoietic porphyria.</title>
        <authorList>
            <person name="Romana M."/>
            <person name="Grandchamp B."/>
            <person name="Dubart A."/>
            <person name="Amselem S."/>
            <person name="Chabret C."/>
            <person name="Nordmann Y."/>
            <person name="Goossens M."/>
            <person name="Romeo P.-H."/>
        </authorList>
    </citation>
    <scope>VARIANT HEP LYS-167</scope>
</reference>
<reference key="27">
    <citation type="journal article" date="1992" name="Hum. Genet.">
        <title>Characterization of a new mutation (R292G) and a deletion at the human uroporphyrinogen decarboxylase locus in two patients with hepatoerythropoietic porphyria.</title>
        <authorList>
            <person name="de Verneuil H."/>
            <person name="Bourgeois F."/>
            <person name="de Rooij F.W.M."/>
            <person name="Siersema P.D."/>
            <person name="Wilson J.H.P."/>
            <person name="Grandchamp B."/>
            <person name="Nordmann Y."/>
        </authorList>
    </citation>
    <scope>VARIANT HEP GLY-292</scope>
</reference>
<reference key="28">
    <citation type="journal article" date="1994" name="J. Invest. Dermatol.">
        <title>Molecular defects of uroporphyrinogen decarboxylase in a patient with mild hepatoerythropoietic porphyria.</title>
        <authorList>
            <person name="Meguro K."/>
            <person name="Fujita H."/>
            <person name="Ishida N."/>
            <person name="Akagi R."/>
            <person name="Kurihara T."/>
            <person name="Galbraith R.A."/>
            <person name="Kappas A."/>
            <person name="Zabriskie J.B."/>
            <person name="Toback A.C."/>
            <person name="Harber L.C."/>
            <person name="Sassa S."/>
        </authorList>
    </citation>
    <scope>VARIANTS HEP GLN-134 AND PRO-220</scope>
</reference>
<reference key="29">
    <citation type="journal article" date="1995" name="J. Invest. Dermatol.">
        <title>A mutation 'G281E' of the human uroporphyrinogen decarboxylase gene causes both hepatoerythropoietic porphyria and overt familial porphyria cutanea tarda: biochemical and genetic studies on Spanish patients.</title>
        <authorList>
            <person name="Roberts A.G."/>
            <person name="Elder G.H."/>
            <person name="de Salamanca R.E."/>
            <person name="Herrero C."/>
            <person name="Lecha M."/>
            <person name="Mascaro J.M."/>
        </authorList>
    </citation>
    <scope>VARIANT FPCT GLU-281</scope>
</reference>
<reference key="30">
    <citation type="journal article" date="1996" name="Blood">
        <title>Five new mutations in the uroporphyrinogen decarboxylase gene identified in families with cutaneous porphyria.</title>
        <authorList>
            <person name="McManus J.F."/>
            <person name="Begley C.G."/>
            <person name="Sassa S."/>
            <person name="Ratnaike S."/>
        </authorList>
    </citation>
    <scope>VARIANT HEP GLY-80</scope>
    <scope>VARIANTS FPCT GLN-253; ARG-318 AND THR-334</scope>
</reference>
<reference key="31">
    <citation type="journal article" date="1998" name="Am. J. Hum. Genet.">
        <title>Familial porphyria cutanea tarda: characterization of seven novel uroporphyrinogen decarboxylase mutations and frequency of common hemochromatosis alleles.</title>
        <authorList>
            <person name="Mendez M."/>
            <person name="Sorkin L."/>
            <person name="Rossetti M.V."/>
            <person name="Astrin K.H."/>
            <person name="Batlle A.M.C."/>
            <person name="Parera V.E."/>
            <person name="Aizencang G.I."/>
            <person name="Desnick R.J."/>
        </authorList>
    </citation>
    <scope>VARIANTS FPCT ARG-165; PHE-195; LYS-304 AND HIS-332</scope>
</reference>
<reference key="32">
    <citation type="journal article" date="1999" name="Hum. Mutat.">
        <title>Three new mutations in the uroporphyrinogen decarboxylase gene in familial porphyria cutanea tarda.</title>
        <authorList>
            <person name="McManus J.F."/>
            <person name="Begley C.G."/>
            <person name="Sassa S."/>
            <person name="Ratnaike S."/>
        </authorList>
    </citation>
    <scope>VARIANT FPCT GLN-134</scope>
</reference>
<reference key="33">
    <citation type="journal article" date="1999" name="Hum. Mutat.">
        <title>Screening for mutations in the uroporphyrinogen decarboxylase gene using denaturing gradient gel electrophoresis. Identification and characterization of six novel mutations associated with familial PCT.</title>
        <authorList>
            <person name="Christiansen L."/>
            <person name="Ged C."/>
            <person name="Hombrados I."/>
            <person name="Broens-Poulsen J."/>
            <person name="Fontanellas A."/>
            <person name="de Verneuil H."/>
            <person name="Hoerder M."/>
            <person name="Petersen N.E."/>
        </authorList>
    </citation>
    <scope>VARIANTS FPCT LEU-229 AND THR-324</scope>
</reference>
<reference key="34">
    <citation type="journal article" date="2000" name="J. Invest. Dermatol.">
        <title>Co-inheritance of mutations in the uroporphyrinogen decarboxylase and hemochromatosis genes accelerates the onset of porphyria cutanea tarda.</title>
        <authorList>
            <person name="Brady J.J."/>
            <person name="Jackson H.A."/>
            <person name="Roberts A.G."/>
            <person name="Morgan R.R."/>
            <person name="Whatley S.D."/>
            <person name="Rowlands G.L."/>
            <person name="Darby C."/>
            <person name="Shudell E."/>
            <person name="Watson R."/>
            <person name="Paiker J."/>
            <person name="Worwood M.W."/>
            <person name="Elder G.H."/>
        </authorList>
    </citation>
    <scope>VARIANTS FPCT SER-80; GLN-134; PRO-144; GLN-216; LYS-218; VAL-281; ARG-282; SER-303 AND ARG-318</scope>
    <scope>FUNCTION</scope>
    <scope>CATALYTIC ACTIVITY</scope>
    <scope>PATHWAY</scope>
    <scope>CHARACTERIZATION OF VARIANTS FPCT PRO-144 AND LYS-218</scope>
</reference>
<reference key="35">
    <citation type="journal article" date="2001" name="Hum. Mutat.">
        <title>Seven novel point mutations in the uroporphyrinogen decarboxylase (UROD) gene in patients with familial porphyria cutanea tarda (f-PCT).</title>
        <authorList>
            <person name="Cappellini M.D."/>
            <person name="Martinez Di Montemuros F."/>
            <person name="Tavazzi D."/>
            <person name="Fargion S."/>
            <person name="Pizzuti A."/>
            <person name="Comino A."/>
            <person name="Cainelli T."/>
            <person name="Fiorelli G."/>
        </authorList>
    </citation>
    <scope>VARIANTS FPCT GLN-142; GLN-161; PHE-219 AND SER-235</scope>
</reference>
<reference key="36">
    <citation type="journal article" date="2002" name="Arch. Dermatol.">
        <title>Description of a new mutation in hepatoerythropoietic porphyria and prenatal exclusion of a homozygous fetus.</title>
        <authorList>
            <person name="Ged C."/>
            <person name="Ozalla D."/>
            <person name="Herrero C."/>
            <person name="Lecha M."/>
            <person name="Mendez M."/>
            <person name="de Verneuil H."/>
            <person name="Mascaro J.M."/>
        </authorList>
    </citation>
    <scope>VARIANT HEP LEU-46</scope>
    <scope>FUNCTION</scope>
    <scope>CHARACTERIZATION OF VARIANT HEP LEU-46</scope>
</reference>
<reference key="37">
    <citation type="journal article" date="2004" name="Br. J. Dermatol.">
        <title>Hepatoerythropoietic porphyria: a missense mutation in the UROD gene is associated with mild disease and an unusual porphyrin excretion pattern.</title>
        <authorList>
            <person name="Armstrong D.K.B."/>
            <person name="Sharpe P.C."/>
            <person name="Chambers C.R."/>
            <person name="Whatley S.D."/>
            <person name="Roberts A.G."/>
            <person name="Elder G.H."/>
        </authorList>
    </citation>
    <scope>VARIANT HEP LEU-46</scope>
</reference>
<reference key="38">
    <citation type="journal article" date="2007" name="Transl. Res.">
        <title>Two novel uroporphyrinogen decarboxylase (URO-D) mutations causing hepatoerythropoietic porphyria (HEP).</title>
        <authorList>
            <person name="Phillips J.D."/>
            <person name="Whitby F.G."/>
            <person name="Stadtmueller B.M."/>
            <person name="Edwards C.Q."/>
            <person name="Hill C.P."/>
            <person name="Kushner J.P."/>
        </authorList>
    </citation>
    <scope>VARIANT HEP ARG-168</scope>
    <scope>CHARACTERIZATION OF VARIANT HEP ARG-168</scope>
</reference>
<reference key="39">
    <citation type="journal article" date="2011" name="Br. J. Dermatol.">
        <title>Hepatoerythropoietic porphyria due to a novel mutation in the uroporphyrinogen decarboxylase gene.</title>
        <authorList>
            <person name="To-Figueras J."/>
            <person name="Phillips J."/>
            <person name="Gonzalez-Lopez J.M."/>
            <person name="Badenas C."/>
            <person name="Madrigal I."/>
            <person name="Gonzalez-Romaris E.M."/>
            <person name="Ramos C."/>
            <person name="Aguirre J.M."/>
            <person name="Herrero C."/>
        </authorList>
    </citation>
    <scope>VARIANT HEP ASP-170</scope>
    <scope>FUNCTION</scope>
    <scope>CATALYTIC ACTIVITY</scope>
    <scope>PATHWAY</scope>
    <scope>CHARACTERIZATION OF VARIANT HEP ASP-170</scope>
</reference>
<sequence length="367" mass="40787">MEANGLGPQGFPELKNDTFLRAAWGEETDYTPVWCMRQAGRYLPEFRETRAAQDFFSTCRSPEACCELTLQPLRRFPLDAAIIFSDILVVPQALGMEVTMVPGKGPSFPEPLREEQDLERLRDPEVVASELGYVFQAITLTRQRLAGRVPLIGFAGAPWTLMTYMVEGGGSSTMAQAKRWLYQRPQASHQLLRILTDALVPYLVGQVVAGAQALQLFESHAGHLGPQLFNKFALPYIRDVAKQVKARLREAGLAPVPMIIFAKDGHFALEELAQAGYEVVGLDWTVAPKKARECVGKTVTLQGNLDPCALYASEEEIGQLVKQMLDDFGPHRYIANLGHGLYPDMDPEHVGAFVDAVHKHSRLLRQN</sequence>
<organism>
    <name type="scientific">Homo sapiens</name>
    <name type="common">Human</name>
    <dbReference type="NCBI Taxonomy" id="9606"/>
    <lineage>
        <taxon>Eukaryota</taxon>
        <taxon>Metazoa</taxon>
        <taxon>Chordata</taxon>
        <taxon>Craniata</taxon>
        <taxon>Vertebrata</taxon>
        <taxon>Euteleostomi</taxon>
        <taxon>Mammalia</taxon>
        <taxon>Eutheria</taxon>
        <taxon>Euarchontoglires</taxon>
        <taxon>Primates</taxon>
        <taxon>Haplorrhini</taxon>
        <taxon>Catarrhini</taxon>
        <taxon>Hominidae</taxon>
        <taxon>Homo</taxon>
    </lineage>
</organism>
<keyword id="KW-0002">3D-structure</keyword>
<keyword id="KW-0007">Acetylation</keyword>
<keyword id="KW-0963">Cytoplasm</keyword>
<keyword id="KW-0210">Decarboxylase</keyword>
<keyword id="KW-0903">Direct protein sequencing</keyword>
<keyword id="KW-0225">Disease variant</keyword>
<keyword id="KW-0350">Heme biosynthesis</keyword>
<keyword id="KW-0456">Lyase</keyword>
<keyword id="KW-0627">Porphyrin biosynthesis</keyword>
<keyword id="KW-1267">Proteomics identification</keyword>
<keyword id="KW-1185">Reference proteome</keyword>
<protein>
    <recommendedName>
        <fullName evidence="29">Uroporphyrinogen decarboxylase</fullName>
        <shortName>UPD</shortName>
        <shortName>URO-D</shortName>
        <ecNumber evidence="4 8 15">4.1.1.37</ecNumber>
    </recommendedName>
</protein>
<gene>
    <name evidence="34" type="primary">UROD</name>
</gene>
<evidence type="ECO:0000250" key="1">
    <source>
        <dbReference type="UniProtKB" id="P70697"/>
    </source>
</evidence>
<evidence type="ECO:0000269" key="2">
    <source>
    </source>
</evidence>
<evidence type="ECO:0000269" key="3">
    <source>
    </source>
</evidence>
<evidence type="ECO:0000269" key="4">
    <source>
    </source>
</evidence>
<evidence type="ECO:0000269" key="5">
    <source>
    </source>
</evidence>
<evidence type="ECO:0000269" key="6">
    <source>
    </source>
</evidence>
<evidence type="ECO:0000269" key="7">
    <source>
    </source>
</evidence>
<evidence type="ECO:0000269" key="8">
    <source>
    </source>
</evidence>
<evidence type="ECO:0000269" key="9">
    <source>
    </source>
</evidence>
<evidence type="ECO:0000269" key="10">
    <source>
    </source>
</evidence>
<evidence type="ECO:0000269" key="11">
    <source>
    </source>
</evidence>
<evidence type="ECO:0000269" key="12">
    <source>
    </source>
</evidence>
<evidence type="ECO:0000269" key="13">
    <source>
    </source>
</evidence>
<evidence type="ECO:0000269" key="14">
    <source>
    </source>
</evidence>
<evidence type="ECO:0000269" key="15">
    <source>
    </source>
</evidence>
<evidence type="ECO:0000269" key="16">
    <source>
    </source>
</evidence>
<evidence type="ECO:0000269" key="17">
    <source>
    </source>
</evidence>
<evidence type="ECO:0000269" key="18">
    <source>
    </source>
</evidence>
<evidence type="ECO:0000269" key="19">
    <source>
    </source>
</evidence>
<evidence type="ECO:0000269" key="20">
    <source>
    </source>
</evidence>
<evidence type="ECO:0000269" key="21">
    <source>
    </source>
</evidence>
<evidence type="ECO:0000269" key="22">
    <source>
    </source>
</evidence>
<evidence type="ECO:0000269" key="23">
    <source>
    </source>
</evidence>
<evidence type="ECO:0000269" key="24">
    <source>
    </source>
</evidence>
<evidence type="ECO:0000269" key="25">
    <source>
    </source>
</evidence>
<evidence type="ECO:0000269" key="26">
    <source ref="4"/>
</evidence>
<evidence type="ECO:0000269" key="27">
    <source ref="5"/>
</evidence>
<evidence type="ECO:0000269" key="28">
    <source ref="6"/>
</evidence>
<evidence type="ECO:0000305" key="29"/>
<evidence type="ECO:0000305" key="30">
    <source>
    </source>
</evidence>
<evidence type="ECO:0000305" key="31">
    <source>
    </source>
</evidence>
<evidence type="ECO:0000305" key="32">
    <source>
    </source>
</evidence>
<evidence type="ECO:0000305" key="33">
    <source>
    </source>
</evidence>
<evidence type="ECO:0000312" key="34">
    <source>
        <dbReference type="HGNC" id="HGNC:12591"/>
    </source>
</evidence>
<evidence type="ECO:0007744" key="35">
    <source>
        <dbReference type="PDB" id="1R3Q"/>
    </source>
</evidence>
<evidence type="ECO:0007744" key="36">
    <source>
        <dbReference type="PDB" id="1R3R"/>
    </source>
</evidence>
<evidence type="ECO:0007744" key="37">
    <source>
        <dbReference type="PDB" id="1R3S"/>
    </source>
</evidence>
<evidence type="ECO:0007744" key="38">
    <source>
        <dbReference type="PDB" id="1R3T"/>
    </source>
</evidence>
<evidence type="ECO:0007744" key="39">
    <source>
        <dbReference type="PDB" id="1R3V"/>
    </source>
</evidence>
<evidence type="ECO:0007744" key="40">
    <source>
        <dbReference type="PDB" id="1R3W"/>
    </source>
</evidence>
<evidence type="ECO:0007744" key="41">
    <source>
        <dbReference type="PDB" id="1R3Y"/>
    </source>
</evidence>
<evidence type="ECO:0007744" key="42">
    <source>
    </source>
</evidence>
<evidence type="ECO:0007744" key="43">
    <source>
    </source>
</evidence>
<evidence type="ECO:0007744" key="44">
    <source>
    </source>
</evidence>
<evidence type="ECO:0007829" key="45">
    <source>
        <dbReference type="PDB" id="1R3S"/>
    </source>
</evidence>
<evidence type="ECO:0007829" key="46">
    <source>
        <dbReference type="PDB" id="3GVV"/>
    </source>
</evidence>
<proteinExistence type="evidence at protein level"/>
<accession>P06132</accession>
<accession>A8K762</accession>
<accession>Q16863</accession>
<accession>Q16883</accession>
<accession>Q53YB8</accession>
<accession>Q53ZP6</accession>
<accession>Q6IB28</accession>
<accession>Q9BUZ0</accession>
<comment type="function">
    <text evidence="4 6 7 8 13 15">Catalyzes the sequential decarboxylation of the four acetate side chains of uroporphyrinogen to form coproporphyrinogen and participates in the fifth step in the heme biosynthetic pathway (PubMed:11069625, PubMed:11719352, PubMed:14633982, PubMed:18004775, PubMed:21668429). Isomer I or isomer III of uroporphyrinogen may serve as substrate, but only coproporphyrinogen III can ultimately be converted to heme (PubMed:11069625, PubMed:11719352, PubMed:14633982, PubMed:21668429). In vitro also decarboxylates pentacarboxylate porphyrinogen I (PubMed:12071824).</text>
</comment>
<comment type="catalytic activity">
    <reaction evidence="4 8 13 15">
        <text>uroporphyrinogen III + 4 H(+) = coproporphyrinogen III + 4 CO2</text>
        <dbReference type="Rhea" id="RHEA:19865"/>
        <dbReference type="ChEBI" id="CHEBI:15378"/>
        <dbReference type="ChEBI" id="CHEBI:16526"/>
        <dbReference type="ChEBI" id="CHEBI:57308"/>
        <dbReference type="ChEBI" id="CHEBI:57309"/>
        <dbReference type="EC" id="4.1.1.37"/>
    </reaction>
    <physiologicalReaction direction="left-to-right" evidence="30 32 33">
        <dbReference type="Rhea" id="RHEA:19866"/>
    </physiologicalReaction>
</comment>
<comment type="catalytic activity">
    <reaction evidence="6 8 15">
        <text>uroporphyrinogen I + 4 H(+) = coproporphyrinogen I + 4 CO2</text>
        <dbReference type="Rhea" id="RHEA:31239"/>
        <dbReference type="ChEBI" id="CHEBI:15378"/>
        <dbReference type="ChEBI" id="CHEBI:16526"/>
        <dbReference type="ChEBI" id="CHEBI:62626"/>
        <dbReference type="ChEBI" id="CHEBI:62631"/>
    </reaction>
    <physiologicalReaction direction="left-to-right" evidence="31 32 33">
        <dbReference type="Rhea" id="RHEA:31240"/>
    </physiologicalReaction>
</comment>
<comment type="biophysicochemical properties">
    <phDependence>
        <text evidence="13">Optimum pH is 6.8.</text>
    </phDependence>
</comment>
<comment type="pathway">
    <text evidence="4 6 8 15">Porphyrin-containing compound metabolism; protoporphyrin-IX biosynthesis; coproporphyrinogen-III from 5-aminolevulinate: step 4/4.</text>
</comment>
<comment type="subunit">
    <text evidence="8 23 24">Homodimer.</text>
</comment>
<comment type="interaction">
    <interactant intactId="EBI-2871776">
        <id>P06132</id>
    </interactant>
    <interactant intactId="EBI-9057780">
        <id>Q96KN1</id>
        <label>LRATD2</label>
    </interactant>
    <organismsDiffer>false</organismsDiffer>
    <experiments>7</experiments>
</comment>
<comment type="interaction">
    <interactant intactId="EBI-2871776">
        <id>P06132</id>
    </interactant>
    <interactant intactId="EBI-1642846">
        <id>P46019</id>
        <label>PHKA2</label>
    </interactant>
    <organismsDiffer>false</organismsDiffer>
    <experiments>3</experiments>
</comment>
<comment type="interaction">
    <interactant intactId="EBI-2871776">
        <id>P06132</id>
    </interactant>
    <interactant intactId="EBI-12117156">
        <id>C9JJ79</id>
        <label>PILRA</label>
    </interactant>
    <organismsDiffer>false</organismsDiffer>
    <experiments>5</experiments>
</comment>
<comment type="interaction">
    <interactant intactId="EBI-2871776">
        <id>P06132</id>
    </interactant>
    <interactant intactId="EBI-6150673">
        <id>A5A3E0</id>
        <label>POTEF</label>
    </interactant>
    <organismsDiffer>false</organismsDiffer>
    <experiments>2</experiments>
</comment>
<comment type="interaction">
    <interactant intactId="EBI-2871776">
        <id>P06132</id>
    </interactant>
    <interactant intactId="EBI-716596">
        <id>Q08752</id>
        <label>PPID</label>
    </interactant>
    <organismsDiffer>false</organismsDiffer>
    <experiments>2</experiments>
</comment>
<comment type="interaction">
    <interactant intactId="EBI-2871776">
        <id>P06132</id>
    </interactant>
    <interactant intactId="EBI-3918381">
        <id>Q96PN8</id>
        <label>TSSK3</label>
    </interactant>
    <organismsDiffer>false</organismsDiffer>
    <experiments>3</experiments>
</comment>
<comment type="subcellular location">
    <subcellularLocation>
        <location evidence="1">Cytoplasm</location>
        <location evidence="1">Cytosol</location>
    </subcellularLocation>
</comment>
<comment type="disease" evidence="2 3 4 5 6 16 17 19 22 25">
    <disease id="DI-00497">
        <name>Familial porphyria cutanea tarda</name>
        <acronym>FPCT</acronym>
        <description>A form of porphyria. Porphyrias are inherited defects in the biosynthesis of heme, resulting in the accumulation and increased excretion of porphyrins or porphyrin precursors. They are classified as erythropoietic or hepatic, depending on whether the enzyme deficiency occurs in red blood cells or in the liver. Familial porphyria cutanea tarda is an autosomal dominant disorder characterized by light-sensitive dermatitis, with onset in later life. It is associated with the excretion of large amounts of uroporphyrin in the urine. Iron overload is often present in association with varying degrees of liver damage.</description>
        <dbReference type="MIM" id="176100"/>
    </disease>
    <text>The disease is caused by variants affecting the gene represented in this entry.</text>
</comment>
<comment type="disease" evidence="7 10 11 12 14 15 18 20 21 22">
    <disease id="DI-00542">
        <name>Hepatoerythropoietic porphyria</name>
        <acronym>HEP</acronym>
        <description>A form of porphyria. Porphyrias are inherited defects in the biosynthesis of heme, resulting in the accumulation and increased excretion of porphyrins or porphyrin precursors. They are classified as erythropoietic or hepatic, depending on whether the enzyme deficiency occurs in red blood cells or in the liver. HEP is a cutaneous porphyria that presents in infancy. It is characterized biochemically by excessive excretion of acetate-substituted porphyrins and accumulation of protoporphyrin in erythrocytes. Uroporphyrinogen decarboxylase levels are very low in erythrocytes and cultured skin fibroblasts.</description>
        <dbReference type="MIM" id="176100"/>
    </disease>
    <text>The disease is caused by variants affecting the gene represented in this entry.</text>
</comment>
<comment type="similarity">
    <text evidence="29">Belongs to the uroporphyrinogen decarboxylase family.</text>
</comment>
<comment type="online information" name="Wikipedia">
    <link uri="https://en.wikipedia.org/wiki/Uroporphyrinogen_III_decarboxylase"/>
    <text>Uroporphyrinogen III decarboxylase entry</text>
</comment>
<name>DCUP_HUMAN</name>
<feature type="chain" id="PRO_0000187569" description="Uroporphyrinogen decarboxylase">
    <location>
        <begin position="1"/>
        <end position="367"/>
    </location>
</feature>
<feature type="binding site" evidence="8 35 39">
    <location>
        <position position="37"/>
    </location>
    <ligand>
        <name>coproporphyrinogen I</name>
        <dbReference type="ChEBI" id="CHEBI:62631"/>
    </ligand>
</feature>
<feature type="binding site" evidence="8 40 41">
    <location>
        <position position="37"/>
    </location>
    <ligand>
        <name>coproporphyrinogen III</name>
        <dbReference type="ChEBI" id="CHEBI:57309"/>
    </ligand>
</feature>
<feature type="binding site" evidence="8 35 37">
    <location>
        <position position="39"/>
    </location>
    <ligand>
        <name>coproporphyrinogen I</name>
        <dbReference type="ChEBI" id="CHEBI:62631"/>
    </ligand>
</feature>
<feature type="binding site" evidence="8 38 40 41">
    <location>
        <position position="39"/>
    </location>
    <ligand>
        <name>coproporphyrinogen III</name>
        <dbReference type="ChEBI" id="CHEBI:57309"/>
    </ligand>
</feature>
<feature type="binding site" evidence="8 35">
    <location>
        <position position="41"/>
    </location>
    <ligand>
        <name>coproporphyrinogen I</name>
        <dbReference type="ChEBI" id="CHEBI:62631"/>
    </ligand>
</feature>
<feature type="binding site" evidence="8 38 40 41">
    <location>
        <position position="41"/>
    </location>
    <ligand>
        <name>coproporphyrinogen III</name>
        <dbReference type="ChEBI" id="CHEBI:57309"/>
    </ligand>
</feature>
<feature type="binding site" evidence="8 35 37">
    <location>
        <position position="50"/>
    </location>
    <ligand>
        <name>coproporphyrinogen I</name>
        <dbReference type="ChEBI" id="CHEBI:62631"/>
    </ligand>
</feature>
<feature type="binding site" evidence="8 35">
    <location>
        <position position="86"/>
    </location>
    <ligand>
        <name>coproporphyrinogen I</name>
        <dbReference type="ChEBI" id="CHEBI:62631"/>
    </ligand>
</feature>
<feature type="binding site" evidence="8 40 41">
    <location>
        <position position="86"/>
    </location>
    <ligand>
        <name>coproporphyrinogen III</name>
        <dbReference type="ChEBI" id="CHEBI:57309"/>
    </ligand>
</feature>
<feature type="binding site" evidence="8 35 37 39">
    <location>
        <position position="164"/>
    </location>
    <ligand>
        <name>coproporphyrinogen I</name>
        <dbReference type="ChEBI" id="CHEBI:62631"/>
    </ligand>
</feature>
<feature type="binding site" evidence="8 41">
    <location>
        <position position="164"/>
    </location>
    <ligand>
        <name>coproporphyrinogen III</name>
        <dbReference type="ChEBI" id="CHEBI:57309"/>
    </ligand>
</feature>
<feature type="binding site" evidence="8 35 37 39">
    <location>
        <position position="219"/>
    </location>
    <ligand>
        <name>coproporphyrinogen I</name>
        <dbReference type="ChEBI" id="CHEBI:62631"/>
    </ligand>
</feature>
<feature type="binding site" evidence="8 38 40">
    <location>
        <position position="219"/>
    </location>
    <ligand>
        <name>coproporphyrinogen III</name>
        <dbReference type="ChEBI" id="CHEBI:57309"/>
    </ligand>
</feature>
<feature type="binding site" evidence="8 39">
    <location>
        <position position="339"/>
    </location>
    <ligand>
        <name>coproporphyrinogen I</name>
        <dbReference type="ChEBI" id="CHEBI:62631"/>
    </ligand>
</feature>
<feature type="binding site" evidence="8 40 41">
    <location>
        <position position="339"/>
    </location>
    <ligand>
        <name>coproporphyrinogen III</name>
        <dbReference type="ChEBI" id="CHEBI:57309"/>
    </ligand>
</feature>
<feature type="site" description="Transition state stabilizer" evidence="8">
    <location>
        <position position="86"/>
    </location>
</feature>
<feature type="modified residue" description="N-acetylmethionine" evidence="42 43 44">
    <location>
        <position position="1"/>
    </location>
</feature>
<feature type="sequence variant" id="VAR_060683" description="In dbSNP:rs11541959.">
    <original>K</original>
    <variation>E</variation>
    <location>
        <position position="15"/>
    </location>
</feature>
<feature type="sequence variant" id="VAR_022567" description="In FPCT; insoluble protein; dbSNP:rs764268015." evidence="6">
    <original>G</original>
    <variation>E</variation>
    <location>
        <position position="25"/>
    </location>
</feature>
<feature type="sequence variant" id="VAR_022568" description="In HEP; mild phenotype; strong decrease of activity; dbSNP:rs769378741." evidence="7 10">
    <original>F</original>
    <variation>L</variation>
    <location>
        <position position="46"/>
    </location>
</feature>
<feature type="sequence variant" id="VAR_009103" description="In HEP; dbSNP:rs121918060." evidence="21">
    <original>P</original>
    <variation>L</variation>
    <location>
        <position position="62"/>
    </location>
</feature>
<feature type="sequence variant" id="VAR_067457" description="In dbSNP:rs1131147." evidence="21 26 27">
    <original>P</original>
    <variation>L</variation>
    <location>
        <position position="77"/>
    </location>
</feature>
<feature type="sequence variant" id="VAR_007910" description="In HEP; dbSNP:rs776907084." evidence="22">
    <original>A</original>
    <variation>G</variation>
    <location>
        <position position="80"/>
    </location>
</feature>
<feature type="sequence variant" id="VAR_022569" description="In FPCT; decrease of activity; dbSNP:rs376921379." evidence="4 6">
    <original>A</original>
    <variation>S</variation>
    <location>
        <position position="80"/>
    </location>
</feature>
<feature type="sequence variant" id="VAR_060684" description="In dbSNP:rs11541962.">
    <original>P</original>
    <variation>L</variation>
    <location>
        <position position="106"/>
    </location>
</feature>
<feature type="sequence variant" id="VAR_060685" description="In dbSNP:rs11541963.">
    <original>R</original>
    <variation>T</variation>
    <location>
        <position position="113"/>
    </location>
</feature>
<feature type="sequence variant" id="VAR_009104" description="In FPCT and HEP; nearly normal activity; requires 2 nucleotide substitutions." evidence="2 4 6 20">
    <original>V</original>
    <variation>Q</variation>
    <location>
        <position position="134"/>
    </location>
</feature>
<feature type="sequence variant" id="VAR_010985" description="In FPCT; dbSNP:rs1182234844." evidence="5">
    <original>R</original>
    <variation>Q</variation>
    <location>
        <position position="142"/>
    </location>
</feature>
<feature type="sequence variant" id="VAR_022570" description="In FPCT; decrease of activity." evidence="4">
    <original>R</original>
    <variation>P</variation>
    <location>
        <position position="144"/>
    </location>
</feature>
<feature type="sequence variant" id="VAR_022571" description="In FPCT; decrease of activity; dbSNP:rs762617943." evidence="6">
    <original>G</original>
    <variation>D</variation>
    <location>
        <position position="156"/>
    </location>
</feature>
<feature type="sequence variant" id="VAR_010986" description="In FPCT." evidence="5">
    <original>L</original>
    <variation>Q</variation>
    <location>
        <position position="161"/>
    </location>
</feature>
<feature type="sequence variant" id="VAR_007911" description="In FPCT; activity &lt; 2%; dbSNP:rs121918063." evidence="6 25">
    <original>M</original>
    <variation>R</variation>
    <location>
        <position position="165"/>
    </location>
</feature>
<feature type="sequence variant" id="VAR_007714" description="In HEP and FPCT; nearly normal activity; dbSNP:rs121918058." evidence="6 14">
    <original>E</original>
    <variation>K</variation>
    <location>
        <position position="167"/>
    </location>
</feature>
<feature type="sequence variant" id="VAR_065558" description="In HEP; relative activity of 65% of wild-type towards uroporphyrinogen III." evidence="12">
    <original>G</original>
    <variation>R</variation>
    <location>
        <position position="168"/>
    </location>
</feature>
<feature type="sequence variant" id="VAR_065559" description="In HEP; relative activity of 17% and 60% of wild-type towards uroporphyrinogen I and III respectively." evidence="15">
    <original>G</original>
    <variation>D</variation>
    <location>
        <position position="170"/>
    </location>
</feature>
<feature type="sequence variant" id="VAR_022572" description="In FPCT; insoluble protein; dbSNP:rs143823335." evidence="6">
    <original>R</original>
    <variation>P</variation>
    <location>
        <position position="193"/>
    </location>
</feature>
<feature type="sequence variant" id="VAR_007912" description="In FPCT; dbSNP:rs121918064." evidence="25">
    <original>L</original>
    <variation>F</variation>
    <location>
        <position position="195"/>
    </location>
</feature>
<feature type="sequence variant" id="VAR_022573" description="In FPCT." evidence="4">
    <original>L</original>
    <variation>Q</variation>
    <location>
        <position position="216"/>
    </location>
</feature>
<feature type="sequence variant" id="VAR_022574" description="In FPCT; significant decrease of activity." evidence="4">
    <original>E</original>
    <variation>K</variation>
    <location>
        <position position="218"/>
    </location>
</feature>
<feature type="sequence variant" id="VAR_010987" description="In FPCT; dbSNP:rs982293378." evidence="5">
    <original>S</original>
    <variation>F</variation>
    <location>
        <position position="219"/>
    </location>
</feature>
<feature type="sequence variant" id="VAR_009105" description="In HEP; mild form; dbSNP:rs1644831872." evidence="20">
    <original>H</original>
    <variation>P</variation>
    <location>
        <position position="220"/>
    </location>
</feature>
<feature type="sequence variant" id="VAR_009106" description="In FPCT." evidence="3">
    <original>F</original>
    <variation>L</variation>
    <location>
        <position position="229"/>
    </location>
</feature>
<feature type="sequence variant" id="VAR_022575" description="In FPCT; decrease of activity; dbSNP:rs1644832199." evidence="6">
    <original>F</original>
    <variation>L</variation>
    <location>
        <position position="232"/>
    </location>
</feature>
<feature type="sequence variant" id="VAR_010988" description="In FPCT; dbSNP:rs141312224." evidence="5">
    <original>P</original>
    <variation>S</variation>
    <location>
        <position position="235"/>
    </location>
</feature>
<feature type="sequence variant" id="VAR_007913" description="In FPCT; decrease of activity; dbSNP:rs36033115." evidence="6 22">
    <original>L</original>
    <variation>Q</variation>
    <location>
        <position position="253"/>
    </location>
</feature>
<feature type="sequence variant" id="VAR_022576" description="In FPCT; decrease of activity; dbSNP:rs1483459837." evidence="6">
    <original>I</original>
    <variation>T</variation>
    <location>
        <position position="260"/>
    </location>
</feature>
<feature type="sequence variant" id="VAR_007715" description="In FPCT and HEP; dbSNP:rs121918057." evidence="18 19 21">
    <original>G</original>
    <variation>E</variation>
    <location>
        <position position="281"/>
    </location>
</feature>
<feature type="sequence variant" id="VAR_007716" description="In FPCT; dbSNP:rs121918057." evidence="4 17">
    <original>G</original>
    <variation>V</variation>
    <location>
        <position position="281"/>
    </location>
</feature>
<feature type="sequence variant" id="VAR_022577" description="In FPCT." evidence="4">
    <original>L</original>
    <variation>R</variation>
    <location>
        <position position="282"/>
    </location>
</feature>
<feature type="sequence variant" id="VAR_007717" description="In HEP; dbSNP:rs121918059." evidence="11">
    <original>R</original>
    <variation>G</variation>
    <location>
        <position position="292"/>
    </location>
</feature>
<feature type="sequence variant" id="VAR_022578" description="In FPCT; dbSNP:rs964670864." evidence="4">
    <original>G</original>
    <variation>S</variation>
    <location>
        <position position="303"/>
    </location>
</feature>
<feature type="sequence variant" id="VAR_060686" description="In dbSNP:rs17849533." evidence="9 28">
    <original>G</original>
    <variation>V</variation>
    <location>
        <position position="303"/>
    </location>
</feature>
<feature type="sequence variant" id="VAR_007914" description="In FPCT; dbSNP:rs121918065." evidence="25">
    <original>N</original>
    <variation>K</variation>
    <location>
        <position position="304"/>
    </location>
</feature>
<feature type="sequence variant" id="VAR_009107" description="In HEP; dbSNP:rs121918061." evidence="21">
    <original>Y</original>
    <variation>C</variation>
    <location>
        <position position="311"/>
    </location>
</feature>
<feature type="sequence variant" id="VAR_007915" description="In FPCT; dbSNP:rs116233118." evidence="4 22">
    <original>G</original>
    <variation>R</variation>
    <location>
        <position position="318"/>
    </location>
</feature>
<feature type="sequence variant" id="VAR_009108" description="In FPCT; dbSNP:rs763746230." evidence="3">
    <original>M</original>
    <variation>T</variation>
    <location>
        <position position="324"/>
    </location>
</feature>
<feature type="sequence variant" id="VAR_007916" description="In FPCT; dbSNP:rs121918066." evidence="25">
    <original>R</original>
    <variation>H</variation>
    <location>
        <position position="332"/>
    </location>
</feature>
<feature type="sequence variant" id="VAR_007917" description="In FPCT." evidence="22">
    <original>I</original>
    <variation>T</variation>
    <location>
        <position position="334"/>
    </location>
</feature>
<feature type="mutagenesis site" description="5-10% of wild-type activity." evidence="8">
    <original>D</original>
    <variation>E</variation>
    <location>
        <position position="86"/>
    </location>
</feature>
<feature type="mutagenesis site" description="Very low activity. Binds substrate with similar geometry as wild-type." evidence="8">
    <original>D</original>
    <variation>G</variation>
    <location>
        <position position="86"/>
    </location>
</feature>
<feature type="mutagenesis site" description="No activity. Unable to bind substrate." evidence="8">
    <original>D</original>
    <variation>N</variation>
    <location>
        <position position="86"/>
    </location>
</feature>
<feature type="mutagenesis site" description="25-30% of wild-type activity." evidence="8">
    <original>Y</original>
    <variation>F</variation>
    <location>
        <position position="164"/>
    </location>
</feature>
<feature type="sequence conflict" description="In Ref. 1; AAA61258 and 14; AAB59456." evidence="29" ref="1 14">
    <original>G</original>
    <variation>S</variation>
    <location>
        <position position="103"/>
    </location>
</feature>
<feature type="sequence conflict" description="In Ref. 1; AAA61258 and 14; AAB59456." evidence="29" ref="1 14">
    <original>R</original>
    <variation>A</variation>
    <location>
        <position position="120"/>
    </location>
</feature>
<feature type="sequence conflict" description="In Ref. 14; AAB59456." evidence="29" ref="14">
    <location>
        <begin position="212"/>
        <end position="214"/>
    </location>
</feature>
<feature type="helix" evidence="45">
    <location>
        <begin position="18"/>
        <end position="24"/>
    </location>
</feature>
<feature type="strand" evidence="45">
    <location>
        <begin position="38"/>
        <end position="40"/>
    </location>
</feature>
<feature type="helix" evidence="45">
    <location>
        <begin position="44"/>
        <end position="51"/>
    </location>
</feature>
<feature type="helix" evidence="45">
    <location>
        <begin position="55"/>
        <end position="59"/>
    </location>
</feature>
<feature type="helix" evidence="45">
    <location>
        <begin position="62"/>
        <end position="75"/>
    </location>
</feature>
<feature type="helix" evidence="45">
    <location>
        <begin position="89"/>
        <end position="93"/>
    </location>
</feature>
<feature type="strand" evidence="45">
    <location>
        <begin position="99"/>
        <end position="101"/>
    </location>
</feature>
<feature type="turn" evidence="45">
    <location>
        <begin position="102"/>
        <end position="104"/>
    </location>
</feature>
<feature type="strand" evidence="45">
    <location>
        <begin position="105"/>
        <end position="107"/>
    </location>
</feature>
<feature type="helix" evidence="45">
    <location>
        <begin position="115"/>
        <end position="120"/>
    </location>
</feature>
<feature type="helix" evidence="45">
    <location>
        <begin position="124"/>
        <end position="126"/>
    </location>
</feature>
<feature type="helix" evidence="45">
    <location>
        <begin position="127"/>
        <end position="130"/>
    </location>
</feature>
<feature type="helix" evidence="45">
    <location>
        <begin position="132"/>
        <end position="145"/>
    </location>
</feature>
<feature type="strand" evidence="45">
    <location>
        <begin position="151"/>
        <end position="156"/>
    </location>
</feature>
<feature type="helix" evidence="45">
    <location>
        <begin position="158"/>
        <end position="167"/>
    </location>
</feature>
<feature type="helix" evidence="45">
    <location>
        <begin position="175"/>
        <end position="183"/>
    </location>
</feature>
<feature type="helix" evidence="45">
    <location>
        <begin position="185"/>
        <end position="208"/>
    </location>
</feature>
<feature type="strand" evidence="45">
    <location>
        <begin position="212"/>
        <end position="218"/>
    </location>
</feature>
<feature type="helix" evidence="45">
    <location>
        <begin position="221"/>
        <end position="223"/>
    </location>
</feature>
<feature type="helix" evidence="45">
    <location>
        <begin position="226"/>
        <end position="232"/>
    </location>
</feature>
<feature type="helix" evidence="45">
    <location>
        <begin position="234"/>
        <end position="250"/>
    </location>
</feature>
<feature type="strand" evidence="45">
    <location>
        <begin position="258"/>
        <end position="262"/>
    </location>
</feature>
<feature type="helix" evidence="45">
    <location>
        <begin position="266"/>
        <end position="268"/>
    </location>
</feature>
<feature type="helix" evidence="45">
    <location>
        <begin position="269"/>
        <end position="272"/>
    </location>
</feature>
<feature type="turn" evidence="46">
    <location>
        <begin position="273"/>
        <end position="276"/>
    </location>
</feature>
<feature type="strand" evidence="45">
    <location>
        <begin position="278"/>
        <end position="281"/>
    </location>
</feature>
<feature type="helix" evidence="45">
    <location>
        <begin position="288"/>
        <end position="295"/>
    </location>
</feature>
<feature type="strand" evidence="45">
    <location>
        <begin position="297"/>
        <end position="305"/>
    </location>
</feature>
<feature type="helix" evidence="45">
    <location>
        <begin position="307"/>
        <end position="311"/>
    </location>
</feature>
<feature type="helix" evidence="45">
    <location>
        <begin position="314"/>
        <end position="328"/>
    </location>
</feature>
<feature type="strand" evidence="45">
    <location>
        <begin position="330"/>
        <end position="339"/>
    </location>
</feature>
<feature type="helix" evidence="45">
    <location>
        <begin position="347"/>
        <end position="365"/>
    </location>
</feature>
<dbReference type="EC" id="4.1.1.37" evidence="4 8 15"/>
<dbReference type="EMBL" id="M14016">
    <property type="protein sequence ID" value="AAA61258.1"/>
    <property type="molecule type" value="mRNA"/>
</dbReference>
<dbReference type="EMBL" id="X89267">
    <property type="protein sequence ID" value="CAA61540.1"/>
    <property type="molecule type" value="Genomic_DNA"/>
</dbReference>
<dbReference type="EMBL" id="AF047383">
    <property type="protein sequence ID" value="AAC03563.1"/>
    <property type="molecule type" value="Genomic_DNA"/>
</dbReference>
<dbReference type="EMBL" id="AF104421">
    <property type="protein sequence ID" value="AAD04571.1"/>
    <property type="molecule type" value="mRNA"/>
</dbReference>
<dbReference type="EMBL" id="AF104422">
    <property type="protein sequence ID" value="AAD04572.1"/>
    <property type="molecule type" value="mRNA"/>
</dbReference>
<dbReference type="EMBL" id="AF104423">
    <property type="protein sequence ID" value="AAD04573.1"/>
    <property type="molecule type" value="mRNA"/>
</dbReference>
<dbReference type="EMBL" id="AF104424">
    <property type="protein sequence ID" value="AAD04574.1"/>
    <property type="molecule type" value="mRNA"/>
</dbReference>
<dbReference type="EMBL" id="AF104425">
    <property type="protein sequence ID" value="AAD04575.1"/>
    <property type="molecule type" value="mRNA"/>
</dbReference>
<dbReference type="EMBL" id="AF104426">
    <property type="protein sequence ID" value="AAD04576.1"/>
    <property type="molecule type" value="mRNA"/>
</dbReference>
<dbReference type="EMBL" id="AF104427">
    <property type="protein sequence ID" value="AAD04577.1"/>
    <property type="molecule type" value="mRNA"/>
</dbReference>
<dbReference type="EMBL" id="AF104428">
    <property type="protein sequence ID" value="AAD04578.1"/>
    <property type="molecule type" value="mRNA"/>
</dbReference>
<dbReference type="EMBL" id="AF104429">
    <property type="protein sequence ID" value="AAD04579.1"/>
    <property type="molecule type" value="mRNA"/>
</dbReference>
<dbReference type="EMBL" id="AF104430">
    <property type="protein sequence ID" value="AAD04580.1"/>
    <property type="molecule type" value="mRNA"/>
</dbReference>
<dbReference type="EMBL" id="AF104431">
    <property type="protein sequence ID" value="AAD04581.1"/>
    <property type="molecule type" value="mRNA"/>
</dbReference>
<dbReference type="EMBL" id="AF104432">
    <property type="protein sequence ID" value="AAD04582.1"/>
    <property type="molecule type" value="mRNA"/>
</dbReference>
<dbReference type="EMBL" id="AF104433">
    <property type="protein sequence ID" value="AAD04583.1"/>
    <property type="molecule type" value="mRNA"/>
</dbReference>
<dbReference type="EMBL" id="AF104434">
    <property type="protein sequence ID" value="AAD04584.1"/>
    <property type="molecule type" value="mRNA"/>
</dbReference>
<dbReference type="EMBL" id="AF104435">
    <property type="protein sequence ID" value="AAD04585.1"/>
    <property type="molecule type" value="mRNA"/>
</dbReference>
<dbReference type="EMBL" id="AF104436">
    <property type="protein sequence ID" value="AAD04586.1"/>
    <property type="molecule type" value="mRNA"/>
</dbReference>
<dbReference type="EMBL" id="AF104437">
    <property type="protein sequence ID" value="AAD04587.1"/>
    <property type="molecule type" value="mRNA"/>
</dbReference>
<dbReference type="EMBL" id="AF104438">
    <property type="protein sequence ID" value="AAD04588.1"/>
    <property type="molecule type" value="mRNA"/>
</dbReference>
<dbReference type="EMBL" id="AF104439">
    <property type="protein sequence ID" value="AAD04589.1"/>
    <property type="molecule type" value="mRNA"/>
</dbReference>
<dbReference type="EMBL" id="AF104440">
    <property type="protein sequence ID" value="AAD04590.1"/>
    <property type="molecule type" value="mRNA"/>
</dbReference>
<dbReference type="EMBL" id="AY292986">
    <property type="protein sequence ID" value="AAP44118.1"/>
    <property type="molecule type" value="Genomic_DNA"/>
</dbReference>
<dbReference type="EMBL" id="BT006737">
    <property type="protein sequence ID" value="AAP35383.1"/>
    <property type="molecule type" value="mRNA"/>
</dbReference>
<dbReference type="EMBL" id="CR456976">
    <property type="protein sequence ID" value="CAG33257.1"/>
    <property type="molecule type" value="mRNA"/>
</dbReference>
<dbReference type="EMBL" id="CR542057">
    <property type="protein sequence ID" value="CAG46854.1"/>
    <property type="molecule type" value="mRNA"/>
</dbReference>
<dbReference type="EMBL" id="AK291877">
    <property type="protein sequence ID" value="BAF84566.1"/>
    <property type="molecule type" value="mRNA"/>
</dbReference>
<dbReference type="EMBL" id="AL359473">
    <property type="status" value="NOT_ANNOTATED_CDS"/>
    <property type="molecule type" value="Genomic_DNA"/>
</dbReference>
<dbReference type="EMBL" id="CH471059">
    <property type="protein sequence ID" value="EAX07007.1"/>
    <property type="molecule type" value="Genomic_DNA"/>
</dbReference>
<dbReference type="EMBL" id="BC001778">
    <property type="protein sequence ID" value="AAH01778.1"/>
    <property type="molecule type" value="mRNA"/>
</dbReference>
<dbReference type="EMBL" id="U30787">
    <property type="protein sequence ID" value="AAC50482.1"/>
    <property type="molecule type" value="Genomic_DNA"/>
</dbReference>
<dbReference type="EMBL" id="M60891">
    <property type="protein sequence ID" value="AAB59456.1"/>
    <property type="molecule type" value="Genomic_DNA"/>
</dbReference>
<dbReference type="CCDS" id="CCDS518.1"/>
<dbReference type="PIR" id="A24411">
    <property type="entry name" value="A24411"/>
</dbReference>
<dbReference type="PIR" id="G02786">
    <property type="entry name" value="G02786"/>
</dbReference>
<dbReference type="RefSeq" id="NP_000365.3">
    <property type="nucleotide sequence ID" value="NM_000374.4"/>
</dbReference>
<dbReference type="PDB" id="1JPH">
    <property type="method" value="X-ray"/>
    <property type="resolution" value="2.10 A"/>
    <property type="chains" value="A=1-367"/>
</dbReference>
<dbReference type="PDB" id="1JPI">
    <property type="method" value="X-ray"/>
    <property type="resolution" value="2.30 A"/>
    <property type="chains" value="A=1-367"/>
</dbReference>
<dbReference type="PDB" id="1JPK">
    <property type="method" value="X-ray"/>
    <property type="resolution" value="2.20 A"/>
    <property type="chains" value="A=1-367"/>
</dbReference>
<dbReference type="PDB" id="1R3Q">
    <property type="method" value="X-ray"/>
    <property type="resolution" value="1.70 A"/>
    <property type="chains" value="A=1-367"/>
</dbReference>
<dbReference type="PDB" id="1R3R">
    <property type="method" value="X-ray"/>
    <property type="resolution" value="1.85 A"/>
    <property type="chains" value="A=1-367"/>
</dbReference>
<dbReference type="PDB" id="1R3S">
    <property type="method" value="X-ray"/>
    <property type="resolution" value="1.65 A"/>
    <property type="chains" value="A=1-367"/>
</dbReference>
<dbReference type="PDB" id="1R3T">
    <property type="method" value="X-ray"/>
    <property type="resolution" value="1.70 A"/>
    <property type="chains" value="A=1-367"/>
</dbReference>
<dbReference type="PDB" id="1R3V">
    <property type="method" value="X-ray"/>
    <property type="resolution" value="1.90 A"/>
    <property type="chains" value="A=1-367"/>
</dbReference>
<dbReference type="PDB" id="1R3W">
    <property type="method" value="X-ray"/>
    <property type="resolution" value="1.70 A"/>
    <property type="chains" value="A=1-367"/>
</dbReference>
<dbReference type="PDB" id="1R3Y">
    <property type="method" value="X-ray"/>
    <property type="resolution" value="1.75 A"/>
    <property type="chains" value="A=1-367"/>
</dbReference>
<dbReference type="PDB" id="1URO">
    <property type="method" value="X-ray"/>
    <property type="resolution" value="1.80 A"/>
    <property type="chains" value="A=1-367"/>
</dbReference>
<dbReference type="PDB" id="2Q6Z">
    <property type="method" value="X-ray"/>
    <property type="resolution" value="2.00 A"/>
    <property type="chains" value="A=11-366"/>
</dbReference>
<dbReference type="PDB" id="2Q71">
    <property type="method" value="X-ray"/>
    <property type="resolution" value="1.90 A"/>
    <property type="chains" value="A=11-366"/>
</dbReference>
<dbReference type="PDB" id="3GVQ">
    <property type="method" value="X-ray"/>
    <property type="resolution" value="2.10 A"/>
    <property type="chains" value="A=1-367"/>
</dbReference>
<dbReference type="PDB" id="3GVR">
    <property type="method" value="X-ray"/>
    <property type="resolution" value="2.20 A"/>
    <property type="chains" value="A=1-367"/>
</dbReference>
<dbReference type="PDB" id="3GVV">
    <property type="method" value="X-ray"/>
    <property type="resolution" value="2.80 A"/>
    <property type="chains" value="A=1-367"/>
</dbReference>
<dbReference type="PDB" id="3GVW">
    <property type="method" value="X-ray"/>
    <property type="resolution" value="2.80 A"/>
    <property type="chains" value="A=1-367"/>
</dbReference>
<dbReference type="PDB" id="3GW0">
    <property type="method" value="X-ray"/>
    <property type="resolution" value="2.00 A"/>
    <property type="chains" value="A=1-367"/>
</dbReference>
<dbReference type="PDB" id="3GW3">
    <property type="method" value="X-ray"/>
    <property type="resolution" value="1.70 A"/>
    <property type="chains" value="A=1-367"/>
</dbReference>
<dbReference type="PDBsum" id="1JPH"/>
<dbReference type="PDBsum" id="1JPI"/>
<dbReference type="PDBsum" id="1JPK"/>
<dbReference type="PDBsum" id="1R3Q"/>
<dbReference type="PDBsum" id="1R3R"/>
<dbReference type="PDBsum" id="1R3S"/>
<dbReference type="PDBsum" id="1R3T"/>
<dbReference type="PDBsum" id="1R3V"/>
<dbReference type="PDBsum" id="1R3W"/>
<dbReference type="PDBsum" id="1R3Y"/>
<dbReference type="PDBsum" id="1URO"/>
<dbReference type="PDBsum" id="2Q6Z"/>
<dbReference type="PDBsum" id="2Q71"/>
<dbReference type="PDBsum" id="3GVQ"/>
<dbReference type="PDBsum" id="3GVR"/>
<dbReference type="PDBsum" id="3GVV"/>
<dbReference type="PDBsum" id="3GVW"/>
<dbReference type="PDBsum" id="3GW0"/>
<dbReference type="PDBsum" id="3GW3"/>
<dbReference type="SMR" id="P06132"/>
<dbReference type="BioGRID" id="113235">
    <property type="interactions" value="44"/>
</dbReference>
<dbReference type="FunCoup" id="P06132">
    <property type="interactions" value="1953"/>
</dbReference>
<dbReference type="IntAct" id="P06132">
    <property type="interactions" value="16"/>
</dbReference>
<dbReference type="MINT" id="P06132"/>
<dbReference type="STRING" id="9606.ENSP00000246337"/>
<dbReference type="ChEMBL" id="CHEMBL1681619"/>
<dbReference type="DrugBank" id="DB03727">
    <property type="generic name" value="Coproporphyrin I"/>
</dbReference>
<dbReference type="DrugBank" id="DB04461">
    <property type="generic name" value="Coproporphyrinogen III"/>
</dbReference>
<dbReference type="GlyGen" id="P06132">
    <property type="glycosylation" value="1 site, 1 O-linked glycan (1 site)"/>
</dbReference>
<dbReference type="iPTMnet" id="P06132"/>
<dbReference type="MetOSite" id="P06132"/>
<dbReference type="PhosphoSitePlus" id="P06132"/>
<dbReference type="BioMuta" id="UROD"/>
<dbReference type="DMDM" id="2507533"/>
<dbReference type="OGP" id="P06132"/>
<dbReference type="jPOST" id="P06132"/>
<dbReference type="MassIVE" id="P06132"/>
<dbReference type="PaxDb" id="9606-ENSP00000246337"/>
<dbReference type="PeptideAtlas" id="P06132"/>
<dbReference type="ProteomicsDB" id="51870"/>
<dbReference type="Pumba" id="P06132"/>
<dbReference type="TopDownProteomics" id="P06132"/>
<dbReference type="Antibodypedia" id="18538">
    <property type="antibodies" value="244 antibodies from 31 providers"/>
</dbReference>
<dbReference type="DNASU" id="7389"/>
<dbReference type="Ensembl" id="ENST00000246337.9">
    <property type="protein sequence ID" value="ENSP00000246337.4"/>
    <property type="gene ID" value="ENSG00000126088.14"/>
</dbReference>
<dbReference type="GeneID" id="7389"/>
<dbReference type="KEGG" id="hsa:7389"/>
<dbReference type="MANE-Select" id="ENST00000246337.9">
    <property type="protein sequence ID" value="ENSP00000246337.4"/>
    <property type="RefSeq nucleotide sequence ID" value="NM_000374.5"/>
    <property type="RefSeq protein sequence ID" value="NP_000365.3"/>
</dbReference>
<dbReference type="UCSC" id="uc001cna.3">
    <property type="organism name" value="human"/>
</dbReference>
<dbReference type="AGR" id="HGNC:12591"/>
<dbReference type="CTD" id="7389"/>
<dbReference type="DisGeNET" id="7389"/>
<dbReference type="GeneCards" id="UROD"/>
<dbReference type="GeneReviews" id="UROD"/>
<dbReference type="HGNC" id="HGNC:12591">
    <property type="gene designation" value="UROD"/>
</dbReference>
<dbReference type="HPA" id="ENSG00000126088">
    <property type="expression patterns" value="Low tissue specificity"/>
</dbReference>
<dbReference type="MalaCards" id="UROD"/>
<dbReference type="MIM" id="176100">
    <property type="type" value="phenotype"/>
</dbReference>
<dbReference type="MIM" id="613521">
    <property type="type" value="gene"/>
</dbReference>
<dbReference type="neXtProt" id="NX_P06132"/>
<dbReference type="OpenTargets" id="ENSG00000126088"/>
<dbReference type="Orphanet" id="443062">
    <property type="disease" value="Familial porphyria cutanea tarda"/>
</dbReference>
<dbReference type="Orphanet" id="95159">
    <property type="disease" value="Hepatoerythropoietic porphyria"/>
</dbReference>
<dbReference type="PharmGKB" id="PA37221"/>
<dbReference type="VEuPathDB" id="HostDB:ENSG00000126088"/>
<dbReference type="eggNOG" id="KOG2872">
    <property type="taxonomic scope" value="Eukaryota"/>
</dbReference>
<dbReference type="GeneTree" id="ENSGT00390000018302"/>
<dbReference type="HOGENOM" id="CLU_040933_0_0_1"/>
<dbReference type="InParanoid" id="P06132"/>
<dbReference type="OMA" id="LWLMRQA"/>
<dbReference type="OrthoDB" id="339900at2759"/>
<dbReference type="PAN-GO" id="P06132">
    <property type="GO annotations" value="3 GO annotations based on evolutionary models"/>
</dbReference>
<dbReference type="PhylomeDB" id="P06132"/>
<dbReference type="TreeFam" id="TF300744"/>
<dbReference type="BioCyc" id="MetaCyc:HS04993-MONOMER"/>
<dbReference type="BRENDA" id="4.1.1.37">
    <property type="organism ID" value="2681"/>
</dbReference>
<dbReference type="PathwayCommons" id="P06132"/>
<dbReference type="Reactome" id="R-HSA-189451">
    <property type="pathway name" value="Heme biosynthesis"/>
</dbReference>
<dbReference type="SignaLink" id="P06132"/>
<dbReference type="UniPathway" id="UPA00251">
    <property type="reaction ID" value="UER00321"/>
</dbReference>
<dbReference type="BioGRID-ORCS" id="7389">
    <property type="hits" value="556 hits in 1169 CRISPR screens"/>
</dbReference>
<dbReference type="ChiTaRS" id="UROD">
    <property type="organism name" value="human"/>
</dbReference>
<dbReference type="EvolutionaryTrace" id="P06132"/>
<dbReference type="GeneWiki" id="Uroporphyrinogen_III_decarboxylase"/>
<dbReference type="GenomeRNAi" id="7389"/>
<dbReference type="Pharos" id="P06132">
    <property type="development level" value="Tbio"/>
</dbReference>
<dbReference type="PRO" id="PR:P06132"/>
<dbReference type="Proteomes" id="UP000005640">
    <property type="component" value="Chromosome 1"/>
</dbReference>
<dbReference type="RNAct" id="P06132">
    <property type="molecule type" value="protein"/>
</dbReference>
<dbReference type="Bgee" id="ENSG00000126088">
    <property type="expression patterns" value="Expressed in trabecular bone tissue and 206 other cell types or tissues"/>
</dbReference>
<dbReference type="ExpressionAtlas" id="P06132">
    <property type="expression patterns" value="baseline and differential"/>
</dbReference>
<dbReference type="GO" id="GO:0005829">
    <property type="term" value="C:cytosol"/>
    <property type="evidence" value="ECO:0000314"/>
    <property type="project" value="HPA"/>
</dbReference>
<dbReference type="GO" id="GO:0005654">
    <property type="term" value="C:nucleoplasm"/>
    <property type="evidence" value="ECO:0000314"/>
    <property type="project" value="HPA"/>
</dbReference>
<dbReference type="GO" id="GO:0004853">
    <property type="term" value="F:uroporphyrinogen decarboxylase activity"/>
    <property type="evidence" value="ECO:0000314"/>
    <property type="project" value="UniProtKB"/>
</dbReference>
<dbReference type="GO" id="GO:0006784">
    <property type="term" value="P:heme A biosynthetic process"/>
    <property type="evidence" value="ECO:0007669"/>
    <property type="project" value="Ensembl"/>
</dbReference>
<dbReference type="GO" id="GO:0006785">
    <property type="term" value="P:heme B biosynthetic process"/>
    <property type="evidence" value="ECO:0000314"/>
    <property type="project" value="UniProt"/>
</dbReference>
<dbReference type="GO" id="GO:0006783">
    <property type="term" value="P:heme biosynthetic process"/>
    <property type="evidence" value="ECO:0000318"/>
    <property type="project" value="GO_Central"/>
</dbReference>
<dbReference type="GO" id="GO:0048034">
    <property type="term" value="P:heme O biosynthetic process"/>
    <property type="evidence" value="ECO:0007669"/>
    <property type="project" value="Ensembl"/>
</dbReference>
<dbReference type="GO" id="GO:0006787">
    <property type="term" value="P:porphyrin-containing compound catabolic process"/>
    <property type="evidence" value="ECO:0000314"/>
    <property type="project" value="UniProtKB"/>
</dbReference>
<dbReference type="GO" id="GO:0006778">
    <property type="term" value="P:porphyrin-containing compound metabolic process"/>
    <property type="evidence" value="ECO:0000314"/>
    <property type="project" value="UniProtKB"/>
</dbReference>
<dbReference type="GO" id="GO:0006782">
    <property type="term" value="P:protoporphyrinogen IX biosynthetic process"/>
    <property type="evidence" value="ECO:0000314"/>
    <property type="project" value="UniProt"/>
</dbReference>
<dbReference type="CDD" id="cd00717">
    <property type="entry name" value="URO-D"/>
    <property type="match status" value="1"/>
</dbReference>
<dbReference type="DisProt" id="DP00308"/>
<dbReference type="FunFam" id="3.20.20.210:FF:000008">
    <property type="entry name" value="Uroporphyrinogen decarboxylase"/>
    <property type="match status" value="1"/>
</dbReference>
<dbReference type="Gene3D" id="3.20.20.210">
    <property type="match status" value="1"/>
</dbReference>
<dbReference type="HAMAP" id="MF_00218">
    <property type="entry name" value="URO_D"/>
    <property type="match status" value="1"/>
</dbReference>
<dbReference type="InterPro" id="IPR038071">
    <property type="entry name" value="UROD/MetE-like_sf"/>
</dbReference>
<dbReference type="InterPro" id="IPR006361">
    <property type="entry name" value="Uroporphyrinogen_deCO2ase_HemE"/>
</dbReference>
<dbReference type="InterPro" id="IPR000257">
    <property type="entry name" value="Uroporphyrinogen_deCOase"/>
</dbReference>
<dbReference type="NCBIfam" id="TIGR01464">
    <property type="entry name" value="hemE"/>
    <property type="match status" value="1"/>
</dbReference>
<dbReference type="PANTHER" id="PTHR21091">
    <property type="entry name" value="METHYLTETRAHYDROFOLATE:HOMOCYSTEINE METHYLTRANSFERASE RELATED"/>
    <property type="match status" value="1"/>
</dbReference>
<dbReference type="PANTHER" id="PTHR21091:SF169">
    <property type="entry name" value="UROPORPHYRINOGEN DECARBOXYLASE"/>
    <property type="match status" value="1"/>
</dbReference>
<dbReference type="Pfam" id="PF01208">
    <property type="entry name" value="URO-D"/>
    <property type="match status" value="1"/>
</dbReference>
<dbReference type="SUPFAM" id="SSF51726">
    <property type="entry name" value="UROD/MetE-like"/>
    <property type="match status" value="1"/>
</dbReference>
<dbReference type="PROSITE" id="PS00906">
    <property type="entry name" value="UROD_1"/>
    <property type="match status" value="1"/>
</dbReference>
<dbReference type="PROSITE" id="PS00907">
    <property type="entry name" value="UROD_2"/>
    <property type="match status" value="1"/>
</dbReference>